<keyword id="KW-0025">Alternative splicing</keyword>
<keyword id="KW-0963">Cytoplasm</keyword>
<keyword id="KW-1185">Reference proteome</keyword>
<keyword id="KW-0677">Repeat</keyword>
<keyword id="KW-0694">RNA-binding</keyword>
<organism>
    <name type="scientific">Mus musculus</name>
    <name type="common">Mouse</name>
    <dbReference type="NCBI Taxonomy" id="10090"/>
    <lineage>
        <taxon>Eukaryota</taxon>
        <taxon>Metazoa</taxon>
        <taxon>Chordata</taxon>
        <taxon>Craniata</taxon>
        <taxon>Vertebrata</taxon>
        <taxon>Euteleostomi</taxon>
        <taxon>Mammalia</taxon>
        <taxon>Eutheria</taxon>
        <taxon>Euarchontoglires</taxon>
        <taxon>Glires</taxon>
        <taxon>Rodentia</taxon>
        <taxon>Myomorpha</taxon>
        <taxon>Muroidea</taxon>
        <taxon>Muridae</taxon>
        <taxon>Murinae</taxon>
        <taxon>Mus</taxon>
        <taxon>Mus</taxon>
    </lineage>
</organism>
<feature type="chain" id="PRO_0000274907" description="RNA-binding motif, single-stranded-interacting protein 3">
    <location>
        <begin position="1"/>
        <end position="431"/>
    </location>
</feature>
<feature type="domain" description="RRM 1" evidence="2">
    <location>
        <begin position="56"/>
        <end position="129"/>
    </location>
</feature>
<feature type="domain" description="RRM 2" evidence="2">
    <location>
        <begin position="135"/>
        <end position="220"/>
    </location>
</feature>
<feature type="region of interest" description="Disordered" evidence="3">
    <location>
        <begin position="28"/>
        <end position="53"/>
    </location>
</feature>
<feature type="region of interest" description="Disordered" evidence="3">
    <location>
        <begin position="220"/>
        <end position="242"/>
    </location>
</feature>
<feature type="region of interest" description="Disordered" evidence="3">
    <location>
        <begin position="393"/>
        <end position="431"/>
    </location>
</feature>
<feature type="compositionally biased region" description="Pro residues" evidence="3">
    <location>
        <begin position="31"/>
        <end position="40"/>
    </location>
</feature>
<feature type="compositionally biased region" description="Low complexity" evidence="3">
    <location>
        <begin position="401"/>
        <end position="411"/>
    </location>
</feature>
<feature type="splice variant" id="VSP_022932" description="In isoform 5." evidence="5">
    <original>MGKRLDQPQMYPQYTYYCPQYLQTKQ</original>
    <variation>MEGGRLLIRSNANGVTQSNSTVRAYQSSKSRVTMSPGFSSQWSNSQPAWNTYSFPRASLHYQSHASYTYCTGHPV</variation>
    <location>
        <begin position="1"/>
        <end position="26"/>
    </location>
</feature>
<feature type="splice variant" id="VSP_022933" description="In isoform 3 and isoform 5." evidence="4 5">
    <location>
        <begin position="292"/>
        <end position="308"/>
    </location>
</feature>
<feature type="splice variant" id="VSP_022934" description="In isoform 2 and isoform 4." evidence="5">
    <location>
        <begin position="346"/>
        <end position="361"/>
    </location>
</feature>
<feature type="splice variant" id="VSP_022935" description="In isoform 4 and isoform 6." evidence="5">
    <original>GVVADTSPQTVAPSSQDSSGQQQQLAVDTPSEHAPAYSFQQSKP</original>
    <variation>TIDRSEDVCLNLYLQ</variation>
    <location>
        <begin position="388"/>
        <end position="431"/>
    </location>
</feature>
<feature type="sequence conflict" description="In Ref. 1; BAC26980." evidence="6" ref="1">
    <original>M</original>
    <variation>I</variation>
    <location>
        <position position="10"/>
    </location>
</feature>
<feature type="sequence conflict" description="In Ref. 1; BAC26980." evidence="6" ref="1">
    <original>Q</original>
    <variation>H</variation>
    <location>
        <position position="20"/>
    </location>
</feature>
<feature type="sequence conflict" description="In Ref. 2; AAI08403." evidence="6" ref="2">
    <original>G</original>
    <variation>S</variation>
    <location>
        <position position="309"/>
    </location>
</feature>
<accession>Q8BWL5</accession>
<accession>Q2VPR0</accession>
<accession>Q8BL73</accession>
<accession>Q8BLW6</accession>
<accession>Q8BMA7</accession>
<accession>Q8BMB5</accession>
<accession>Q8BML0</accession>
<accession>Q8BMN1</accession>
<dbReference type="EMBL" id="AK030478">
    <property type="protein sequence ID" value="BAC26980.1"/>
    <property type="molecule type" value="mRNA"/>
</dbReference>
<dbReference type="EMBL" id="AK030609">
    <property type="protein sequence ID" value="BAC27045.1"/>
    <property type="molecule type" value="mRNA"/>
</dbReference>
<dbReference type="EMBL" id="AK032938">
    <property type="protein sequence ID" value="BAC28091.1"/>
    <property type="molecule type" value="mRNA"/>
</dbReference>
<dbReference type="EMBL" id="AK033005">
    <property type="protein sequence ID" value="BAC28122.1"/>
    <property type="molecule type" value="mRNA"/>
</dbReference>
<dbReference type="EMBL" id="AK041098">
    <property type="protein sequence ID" value="BAC30820.1"/>
    <property type="molecule type" value="mRNA"/>
</dbReference>
<dbReference type="EMBL" id="AK046197">
    <property type="protein sequence ID" value="BAC32633.1"/>
    <property type="molecule type" value="mRNA"/>
</dbReference>
<dbReference type="EMBL" id="AK052196">
    <property type="protein sequence ID" value="BAC34878.1"/>
    <property type="status" value="ALT_INIT"/>
    <property type="molecule type" value="mRNA"/>
</dbReference>
<dbReference type="EMBL" id="BC108402">
    <property type="protein sequence ID" value="AAI08403.1"/>
    <property type="molecule type" value="mRNA"/>
</dbReference>
<dbReference type="EMBL" id="BC117841">
    <property type="protein sequence ID" value="AAI17842.1"/>
    <property type="molecule type" value="mRNA"/>
</dbReference>
<dbReference type="CCDS" id="CCDS40798.1">
    <molecule id="Q8BWL5-3"/>
</dbReference>
<dbReference type="CCDS" id="CCDS52955.1">
    <molecule id="Q8BWL5-2"/>
</dbReference>
<dbReference type="CCDS" id="CCDS52956.1">
    <molecule id="Q8BWL5-6"/>
</dbReference>
<dbReference type="CCDS" id="CCDS52957.1">
    <molecule id="Q8BWL5-1"/>
</dbReference>
<dbReference type="CCDS" id="CCDS57711.1">
    <molecule id="Q8BWL5-4"/>
</dbReference>
<dbReference type="CCDS" id="CCDS57712.1">
    <molecule id="Q8BWL5-5"/>
</dbReference>
<dbReference type="RefSeq" id="NP_001165592.1">
    <molecule id="Q8BWL5-5"/>
    <property type="nucleotide sequence ID" value="NM_001172121.1"/>
</dbReference>
<dbReference type="RefSeq" id="NP_001165593.1">
    <molecule id="Q8BWL5-2"/>
    <property type="nucleotide sequence ID" value="NM_001172122.1"/>
</dbReference>
<dbReference type="RefSeq" id="NP_001165594.1">
    <molecule id="Q8BWL5-1"/>
    <property type="nucleotide sequence ID" value="NM_001172123.1"/>
</dbReference>
<dbReference type="RefSeq" id="NP_001165595.1">
    <molecule id="Q8BWL5-6"/>
    <property type="nucleotide sequence ID" value="NM_001172124.1"/>
</dbReference>
<dbReference type="RefSeq" id="NP_001165597.1">
    <molecule id="Q8BWL5-4"/>
    <property type="nucleotide sequence ID" value="NM_001172126.1"/>
</dbReference>
<dbReference type="RefSeq" id="NP_848775.2">
    <molecule id="Q8BWL5-3"/>
    <property type="nucleotide sequence ID" value="NM_178660.4"/>
</dbReference>
<dbReference type="SMR" id="Q8BWL5"/>
<dbReference type="FunCoup" id="Q8BWL5">
    <property type="interactions" value="1695"/>
</dbReference>
<dbReference type="STRING" id="10090.ENSMUSP00000131371"/>
<dbReference type="GlyGen" id="Q8BWL5">
    <property type="glycosylation" value="1 site"/>
</dbReference>
<dbReference type="iPTMnet" id="Q8BWL5"/>
<dbReference type="PhosphoSitePlus" id="Q8BWL5"/>
<dbReference type="PaxDb" id="10090-ENSMUSP00000107403"/>
<dbReference type="ProteomicsDB" id="255043">
    <molecule id="Q8BWL5-1"/>
</dbReference>
<dbReference type="ProteomicsDB" id="255044">
    <molecule id="Q8BWL5-2"/>
</dbReference>
<dbReference type="ProteomicsDB" id="255045">
    <molecule id="Q8BWL5-3"/>
</dbReference>
<dbReference type="ProteomicsDB" id="255046">
    <molecule id="Q8BWL5-4"/>
</dbReference>
<dbReference type="ProteomicsDB" id="255047">
    <molecule id="Q8BWL5-5"/>
</dbReference>
<dbReference type="ProteomicsDB" id="255048">
    <molecule id="Q8BWL5-6"/>
</dbReference>
<dbReference type="Pumba" id="Q8BWL5"/>
<dbReference type="Antibodypedia" id="11544">
    <property type="antibodies" value="183 antibodies from 25 providers"/>
</dbReference>
<dbReference type="DNASU" id="207181"/>
<dbReference type="Ensembl" id="ENSMUST00000044901.14">
    <molecule id="Q8BWL5-4"/>
    <property type="protein sequence ID" value="ENSMUSP00000039706.8"/>
    <property type="gene ID" value="ENSMUSG00000039607.18"/>
</dbReference>
<dbReference type="Ensembl" id="ENSMUST00000068962.14">
    <molecule id="Q8BWL5-3"/>
    <property type="protein sequence ID" value="ENSMUSP00000066735.8"/>
    <property type="gene ID" value="ENSMUSG00000039607.18"/>
</dbReference>
<dbReference type="Ensembl" id="ENSMUST00000111772.10">
    <molecule id="Q8BWL5-2"/>
    <property type="protein sequence ID" value="ENSMUSP00000107402.4"/>
    <property type="gene ID" value="ENSMUSG00000039607.18"/>
</dbReference>
<dbReference type="Ensembl" id="ENSMUST00000111773.10">
    <molecule id="Q8BWL5-1"/>
    <property type="protein sequence ID" value="ENSMUSP00000107403.4"/>
    <property type="gene ID" value="ENSMUSG00000039607.18"/>
</dbReference>
<dbReference type="Ensembl" id="ENSMUST00000164018.9">
    <molecule id="Q8BWL5-5"/>
    <property type="protein sequence ID" value="ENSMUSP00000131371.3"/>
    <property type="gene ID" value="ENSMUSG00000039607.18"/>
</dbReference>
<dbReference type="Ensembl" id="ENSMUST00000174868.8">
    <molecule id="Q8BWL5-6"/>
    <property type="protein sequence ID" value="ENSMUSP00000133621.2"/>
    <property type="gene ID" value="ENSMUSG00000039607.18"/>
</dbReference>
<dbReference type="GeneID" id="207181"/>
<dbReference type="KEGG" id="mmu:207181"/>
<dbReference type="UCSC" id="uc009ryv.3">
    <molecule id="Q8BWL5-3"/>
    <property type="organism name" value="mouse"/>
</dbReference>
<dbReference type="UCSC" id="uc009ryw.3">
    <molecule id="Q8BWL5-1"/>
    <property type="organism name" value="mouse"/>
</dbReference>
<dbReference type="UCSC" id="uc009ryx.3">
    <molecule id="Q8BWL5-2"/>
    <property type="organism name" value="mouse"/>
</dbReference>
<dbReference type="UCSC" id="uc009ryy.3">
    <molecule id="Q8BWL5-6"/>
    <property type="organism name" value="mouse"/>
</dbReference>
<dbReference type="UCSC" id="uc009ryz.3">
    <molecule id="Q8BWL5-4"/>
    <property type="organism name" value="mouse"/>
</dbReference>
<dbReference type="UCSC" id="uc009rza.3">
    <molecule id="Q8BWL5-5"/>
    <property type="organism name" value="mouse"/>
</dbReference>
<dbReference type="AGR" id="MGI:2444477"/>
<dbReference type="CTD" id="27303"/>
<dbReference type="MGI" id="MGI:2444477">
    <property type="gene designation" value="Rbms3"/>
</dbReference>
<dbReference type="VEuPathDB" id="HostDB:ENSMUSG00000039607"/>
<dbReference type="eggNOG" id="KOG4733">
    <property type="taxonomic scope" value="Eukaryota"/>
</dbReference>
<dbReference type="GeneTree" id="ENSGT00940000157131"/>
<dbReference type="HOGENOM" id="CLU_016278_2_0_1"/>
<dbReference type="InParanoid" id="Q8BWL5"/>
<dbReference type="OMA" id="LGTTGTX"/>
<dbReference type="OrthoDB" id="45596at9989"/>
<dbReference type="PhylomeDB" id="Q8BWL5"/>
<dbReference type="TreeFam" id="TF314644"/>
<dbReference type="BioGRID-ORCS" id="207181">
    <property type="hits" value="6 hits in 79 CRISPR screens"/>
</dbReference>
<dbReference type="ChiTaRS" id="Rbms3">
    <property type="organism name" value="mouse"/>
</dbReference>
<dbReference type="PRO" id="PR:Q8BWL5"/>
<dbReference type="Proteomes" id="UP000000589">
    <property type="component" value="Chromosome 9"/>
</dbReference>
<dbReference type="RNAct" id="Q8BWL5">
    <property type="molecule type" value="protein"/>
</dbReference>
<dbReference type="Bgee" id="ENSMUSG00000039607">
    <property type="expression patterns" value="Expressed in vas deferens and 217 other cell types or tissues"/>
</dbReference>
<dbReference type="ExpressionAtlas" id="Q8BWL5">
    <property type="expression patterns" value="baseline and differential"/>
</dbReference>
<dbReference type="GO" id="GO:0005737">
    <property type="term" value="C:cytoplasm"/>
    <property type="evidence" value="ECO:0007669"/>
    <property type="project" value="UniProtKB-SubCell"/>
</dbReference>
<dbReference type="GO" id="GO:1990904">
    <property type="term" value="C:ribonucleoprotein complex"/>
    <property type="evidence" value="ECO:0007669"/>
    <property type="project" value="InterPro"/>
</dbReference>
<dbReference type="GO" id="GO:0035925">
    <property type="term" value="F:mRNA 3'-UTR AU-rich region binding"/>
    <property type="evidence" value="ECO:0007669"/>
    <property type="project" value="Ensembl"/>
</dbReference>
<dbReference type="GO" id="GO:0003730">
    <property type="term" value="F:mRNA 3'-UTR binding"/>
    <property type="evidence" value="ECO:0000314"/>
    <property type="project" value="MGI"/>
</dbReference>
<dbReference type="GO" id="GO:0008143">
    <property type="term" value="F:poly(A) binding"/>
    <property type="evidence" value="ECO:0007669"/>
    <property type="project" value="Ensembl"/>
</dbReference>
<dbReference type="GO" id="GO:0008266">
    <property type="term" value="F:poly(U) RNA binding"/>
    <property type="evidence" value="ECO:0007669"/>
    <property type="project" value="Ensembl"/>
</dbReference>
<dbReference type="GO" id="GO:0002357">
    <property type="term" value="P:defense response to tumor cell"/>
    <property type="evidence" value="ECO:0007669"/>
    <property type="project" value="Ensembl"/>
</dbReference>
<dbReference type="GO" id="GO:0090090">
    <property type="term" value="P:negative regulation of canonical Wnt signaling pathway"/>
    <property type="evidence" value="ECO:0007669"/>
    <property type="project" value="Ensembl"/>
</dbReference>
<dbReference type="GO" id="GO:0010629">
    <property type="term" value="P:negative regulation of gene expression"/>
    <property type="evidence" value="ECO:0007669"/>
    <property type="project" value="Ensembl"/>
</dbReference>
<dbReference type="GO" id="GO:0045727">
    <property type="term" value="P:positive regulation of translation"/>
    <property type="evidence" value="ECO:0000314"/>
    <property type="project" value="MGI"/>
</dbReference>
<dbReference type="CDD" id="cd12472">
    <property type="entry name" value="RRM1_RBMS3"/>
    <property type="match status" value="1"/>
</dbReference>
<dbReference type="CDD" id="cd12475">
    <property type="entry name" value="RRM2_RBMS3"/>
    <property type="match status" value="1"/>
</dbReference>
<dbReference type="FunFam" id="3.30.70.330:FF:000012">
    <property type="entry name" value="RNA-binding motif, single-stranded-interacting protein 3 isoform 1"/>
    <property type="match status" value="1"/>
</dbReference>
<dbReference type="FunFam" id="3.30.70.330:FF:000014">
    <property type="entry name" value="RNA-binding motif, single-stranded-interacting protein 3 isoform 1"/>
    <property type="match status" value="1"/>
</dbReference>
<dbReference type="Gene3D" id="3.30.70.330">
    <property type="match status" value="2"/>
</dbReference>
<dbReference type="InterPro" id="IPR002343">
    <property type="entry name" value="Hud_Sxl_RNA"/>
</dbReference>
<dbReference type="InterPro" id="IPR012677">
    <property type="entry name" value="Nucleotide-bd_a/b_plait_sf"/>
</dbReference>
<dbReference type="InterPro" id="IPR035979">
    <property type="entry name" value="RBD_domain_sf"/>
</dbReference>
<dbReference type="InterPro" id="IPR034406">
    <property type="entry name" value="RBMS3_RRM2"/>
</dbReference>
<dbReference type="InterPro" id="IPR000504">
    <property type="entry name" value="RRM_dom"/>
</dbReference>
<dbReference type="PANTHER" id="PTHR24012">
    <property type="entry name" value="RNA BINDING PROTEIN"/>
    <property type="match status" value="1"/>
</dbReference>
<dbReference type="Pfam" id="PF00076">
    <property type="entry name" value="RRM_1"/>
    <property type="match status" value="2"/>
</dbReference>
<dbReference type="PRINTS" id="PR00961">
    <property type="entry name" value="HUDSXLRNA"/>
</dbReference>
<dbReference type="SMART" id="SM00360">
    <property type="entry name" value="RRM"/>
    <property type="match status" value="2"/>
</dbReference>
<dbReference type="SUPFAM" id="SSF54928">
    <property type="entry name" value="RNA-binding domain, RBD"/>
    <property type="match status" value="1"/>
</dbReference>
<dbReference type="PROSITE" id="PS50102">
    <property type="entry name" value="RRM"/>
    <property type="match status" value="2"/>
</dbReference>
<reference key="1">
    <citation type="journal article" date="2005" name="Science">
        <title>The transcriptional landscape of the mammalian genome.</title>
        <authorList>
            <person name="Carninci P."/>
            <person name="Kasukawa T."/>
            <person name="Katayama S."/>
            <person name="Gough J."/>
            <person name="Frith M.C."/>
            <person name="Maeda N."/>
            <person name="Oyama R."/>
            <person name="Ravasi T."/>
            <person name="Lenhard B."/>
            <person name="Wells C."/>
            <person name="Kodzius R."/>
            <person name="Shimokawa K."/>
            <person name="Bajic V.B."/>
            <person name="Brenner S.E."/>
            <person name="Batalov S."/>
            <person name="Forrest A.R."/>
            <person name="Zavolan M."/>
            <person name="Davis M.J."/>
            <person name="Wilming L.G."/>
            <person name="Aidinis V."/>
            <person name="Allen J.E."/>
            <person name="Ambesi-Impiombato A."/>
            <person name="Apweiler R."/>
            <person name="Aturaliya R.N."/>
            <person name="Bailey T.L."/>
            <person name="Bansal M."/>
            <person name="Baxter L."/>
            <person name="Beisel K.W."/>
            <person name="Bersano T."/>
            <person name="Bono H."/>
            <person name="Chalk A.M."/>
            <person name="Chiu K.P."/>
            <person name="Choudhary V."/>
            <person name="Christoffels A."/>
            <person name="Clutterbuck D.R."/>
            <person name="Crowe M.L."/>
            <person name="Dalla E."/>
            <person name="Dalrymple B.P."/>
            <person name="de Bono B."/>
            <person name="Della Gatta G."/>
            <person name="di Bernardo D."/>
            <person name="Down T."/>
            <person name="Engstrom P."/>
            <person name="Fagiolini M."/>
            <person name="Faulkner G."/>
            <person name="Fletcher C.F."/>
            <person name="Fukushima T."/>
            <person name="Furuno M."/>
            <person name="Futaki S."/>
            <person name="Gariboldi M."/>
            <person name="Georgii-Hemming P."/>
            <person name="Gingeras T.R."/>
            <person name="Gojobori T."/>
            <person name="Green R.E."/>
            <person name="Gustincich S."/>
            <person name="Harbers M."/>
            <person name="Hayashi Y."/>
            <person name="Hensch T.K."/>
            <person name="Hirokawa N."/>
            <person name="Hill D."/>
            <person name="Huminiecki L."/>
            <person name="Iacono M."/>
            <person name="Ikeo K."/>
            <person name="Iwama A."/>
            <person name="Ishikawa T."/>
            <person name="Jakt M."/>
            <person name="Kanapin A."/>
            <person name="Katoh M."/>
            <person name="Kawasawa Y."/>
            <person name="Kelso J."/>
            <person name="Kitamura H."/>
            <person name="Kitano H."/>
            <person name="Kollias G."/>
            <person name="Krishnan S.P."/>
            <person name="Kruger A."/>
            <person name="Kummerfeld S.K."/>
            <person name="Kurochkin I.V."/>
            <person name="Lareau L.F."/>
            <person name="Lazarevic D."/>
            <person name="Lipovich L."/>
            <person name="Liu J."/>
            <person name="Liuni S."/>
            <person name="McWilliam S."/>
            <person name="Madan Babu M."/>
            <person name="Madera M."/>
            <person name="Marchionni L."/>
            <person name="Matsuda H."/>
            <person name="Matsuzawa S."/>
            <person name="Miki H."/>
            <person name="Mignone F."/>
            <person name="Miyake S."/>
            <person name="Morris K."/>
            <person name="Mottagui-Tabar S."/>
            <person name="Mulder N."/>
            <person name="Nakano N."/>
            <person name="Nakauchi H."/>
            <person name="Ng P."/>
            <person name="Nilsson R."/>
            <person name="Nishiguchi S."/>
            <person name="Nishikawa S."/>
            <person name="Nori F."/>
            <person name="Ohara O."/>
            <person name="Okazaki Y."/>
            <person name="Orlando V."/>
            <person name="Pang K.C."/>
            <person name="Pavan W.J."/>
            <person name="Pavesi G."/>
            <person name="Pesole G."/>
            <person name="Petrovsky N."/>
            <person name="Piazza S."/>
            <person name="Reed J."/>
            <person name="Reid J.F."/>
            <person name="Ring B.Z."/>
            <person name="Ringwald M."/>
            <person name="Rost B."/>
            <person name="Ruan Y."/>
            <person name="Salzberg S.L."/>
            <person name="Sandelin A."/>
            <person name="Schneider C."/>
            <person name="Schoenbach C."/>
            <person name="Sekiguchi K."/>
            <person name="Semple C.A."/>
            <person name="Seno S."/>
            <person name="Sessa L."/>
            <person name="Sheng Y."/>
            <person name="Shibata Y."/>
            <person name="Shimada H."/>
            <person name="Shimada K."/>
            <person name="Silva D."/>
            <person name="Sinclair B."/>
            <person name="Sperling S."/>
            <person name="Stupka E."/>
            <person name="Sugiura K."/>
            <person name="Sultana R."/>
            <person name="Takenaka Y."/>
            <person name="Taki K."/>
            <person name="Tammoja K."/>
            <person name="Tan S.L."/>
            <person name="Tang S."/>
            <person name="Taylor M.S."/>
            <person name="Tegner J."/>
            <person name="Teichmann S.A."/>
            <person name="Ueda H.R."/>
            <person name="van Nimwegen E."/>
            <person name="Verardo R."/>
            <person name="Wei C.L."/>
            <person name="Yagi K."/>
            <person name="Yamanishi H."/>
            <person name="Zabarovsky E."/>
            <person name="Zhu S."/>
            <person name="Zimmer A."/>
            <person name="Hide W."/>
            <person name="Bult C."/>
            <person name="Grimmond S.M."/>
            <person name="Teasdale R.D."/>
            <person name="Liu E.T."/>
            <person name="Brusic V."/>
            <person name="Quackenbush J."/>
            <person name="Wahlestedt C."/>
            <person name="Mattick J.S."/>
            <person name="Hume D.A."/>
            <person name="Kai C."/>
            <person name="Sasaki D."/>
            <person name="Tomaru Y."/>
            <person name="Fukuda S."/>
            <person name="Kanamori-Katayama M."/>
            <person name="Suzuki M."/>
            <person name="Aoki J."/>
            <person name="Arakawa T."/>
            <person name="Iida J."/>
            <person name="Imamura K."/>
            <person name="Itoh M."/>
            <person name="Kato T."/>
            <person name="Kawaji H."/>
            <person name="Kawagashira N."/>
            <person name="Kawashima T."/>
            <person name="Kojima M."/>
            <person name="Kondo S."/>
            <person name="Konno H."/>
            <person name="Nakano K."/>
            <person name="Ninomiya N."/>
            <person name="Nishio T."/>
            <person name="Okada M."/>
            <person name="Plessy C."/>
            <person name="Shibata K."/>
            <person name="Shiraki T."/>
            <person name="Suzuki S."/>
            <person name="Tagami M."/>
            <person name="Waki K."/>
            <person name="Watahiki A."/>
            <person name="Okamura-Oho Y."/>
            <person name="Suzuki H."/>
            <person name="Kawai J."/>
            <person name="Hayashizaki Y."/>
        </authorList>
    </citation>
    <scope>NUCLEOTIDE SEQUENCE [LARGE SCALE MRNA] (ISOFORMS 1; 2; 3; 4; 5 AND 6)</scope>
    <source>
        <strain>C57BL/6J</strain>
        <tissue>Aorta</tissue>
        <tissue>Corpora quadrigemina</tissue>
        <tissue>Heart</tissue>
        <tissue>Pituitary</tissue>
        <tissue>Vein</tissue>
        <tissue>Wolffian duct</tissue>
    </source>
</reference>
<reference key="2">
    <citation type="journal article" date="2004" name="Genome Res.">
        <title>The status, quality, and expansion of the NIH full-length cDNA project: the Mammalian Gene Collection (MGC).</title>
        <authorList>
            <consortium name="The MGC Project Team"/>
        </authorList>
    </citation>
    <scope>NUCLEOTIDE SEQUENCE [LARGE SCALE MRNA] (ISOFORM 3)</scope>
    <source>
        <tissue>Limb</tissue>
    </source>
</reference>
<sequence length="431" mass="46927">MGKRLDQPQMYPQYTYYCPQYLQTKQSYAPAPHPMAPPSPSTNSSSNSSGEQLSKTNLYIRGLPPGTTDQDLIKLCQPYGKIVSTKAILDKNTNQCKGYGFVDFDSPAAAQKAVASLKANGVQAQMAKQQEQDPTNLYISNLPISMDEQELENMLKPFGHVISTRILRDANGVSRGVGFARMESTEKCEVVIQHFNGKYLKTPPGIPAPSEPLLCKFADGGQKKRQGQSKHTQNGRPWPREGEAGMALTYDPTAALQNGFYSSPYSLATNRMIPQTSITPFIAASPVSTYQVQSTSWTPHLPYIMQPTGAVITPAVDHPMSMQPTNIVGPLTQQMNHLSLGTAGTIQSQDRIMVLHQLLCQYMTAAPMQGTYIPQYTPVPPTAVSIEGVVADTSPQTVAPSSQDSSGQQQQLAVDTPSEHAPAYSFQQSKP</sequence>
<evidence type="ECO:0000250" key="1"/>
<evidence type="ECO:0000255" key="2">
    <source>
        <dbReference type="PROSITE-ProRule" id="PRU00176"/>
    </source>
</evidence>
<evidence type="ECO:0000256" key="3">
    <source>
        <dbReference type="SAM" id="MobiDB-lite"/>
    </source>
</evidence>
<evidence type="ECO:0000303" key="4">
    <source>
    </source>
</evidence>
<evidence type="ECO:0000303" key="5">
    <source>
    </source>
</evidence>
<evidence type="ECO:0000305" key="6"/>
<gene>
    <name type="primary">Rbms3</name>
</gene>
<proteinExistence type="evidence at transcript level"/>
<name>RBMS3_MOUSE</name>
<comment type="function">
    <text evidence="1">Binds poly(A) and poly(U) oligoribonucleotides.</text>
</comment>
<comment type="subcellular location">
    <subcellularLocation>
        <location evidence="1">Cytoplasm</location>
    </subcellularLocation>
</comment>
<comment type="alternative products">
    <event type="alternative splicing"/>
    <isoform>
        <id>Q8BWL5-1</id>
        <name>1</name>
        <sequence type="displayed"/>
    </isoform>
    <isoform>
        <id>Q8BWL5-2</id>
        <name>2</name>
        <sequence type="described" ref="VSP_022934"/>
    </isoform>
    <isoform>
        <id>Q8BWL5-3</id>
        <name>3</name>
        <sequence type="described" ref="VSP_022933"/>
    </isoform>
    <isoform>
        <id>Q8BWL5-4</id>
        <name>4</name>
        <sequence type="described" ref="VSP_022934 VSP_022935"/>
    </isoform>
    <isoform>
        <id>Q8BWL5-5</id>
        <name>5</name>
        <sequence type="described" ref="VSP_022932 VSP_022933"/>
    </isoform>
    <isoform>
        <id>Q8BWL5-6</id>
        <name>6</name>
        <sequence type="described" ref="VSP_022935"/>
    </isoform>
</comment>
<comment type="sequence caution" evidence="6">
    <conflict type="erroneous initiation">
        <sequence resource="EMBL-CDS" id="BAC34878"/>
    </conflict>
</comment>
<protein>
    <recommendedName>
        <fullName>RNA-binding motif, single-stranded-interacting protein 3</fullName>
    </recommendedName>
</protein>